<dbReference type="EC" id="2.4.1.182"/>
<dbReference type="EMBL" id="AE004091">
    <property type="protein sequence ID" value="AAG07031.1"/>
    <property type="molecule type" value="Genomic_DNA"/>
</dbReference>
<dbReference type="PIR" id="C83190">
    <property type="entry name" value="C83190"/>
</dbReference>
<dbReference type="RefSeq" id="NP_252333.1">
    <property type="nucleotide sequence ID" value="NC_002516.2"/>
</dbReference>
<dbReference type="RefSeq" id="WP_003113865.1">
    <property type="nucleotide sequence ID" value="NZ_QZGE01000001.1"/>
</dbReference>
<dbReference type="SMR" id="Q9HXY8"/>
<dbReference type="FunCoup" id="Q9HXY8">
    <property type="interactions" value="355"/>
</dbReference>
<dbReference type="STRING" id="208964.PA3643"/>
<dbReference type="CAZy" id="GT19">
    <property type="family name" value="Glycosyltransferase Family 19"/>
</dbReference>
<dbReference type="PaxDb" id="208964-PA3643"/>
<dbReference type="GeneID" id="880521"/>
<dbReference type="KEGG" id="pae:PA3643"/>
<dbReference type="PATRIC" id="fig|208964.12.peg.3812"/>
<dbReference type="PseudoCAP" id="PA3643"/>
<dbReference type="HOGENOM" id="CLU_036577_3_0_6"/>
<dbReference type="InParanoid" id="Q9HXY8"/>
<dbReference type="OrthoDB" id="9801642at2"/>
<dbReference type="PhylomeDB" id="Q9HXY8"/>
<dbReference type="BioCyc" id="PAER208964:G1FZ6-3713-MONOMER"/>
<dbReference type="UniPathway" id="UPA00973"/>
<dbReference type="Proteomes" id="UP000002438">
    <property type="component" value="Chromosome"/>
</dbReference>
<dbReference type="GO" id="GO:0016020">
    <property type="term" value="C:membrane"/>
    <property type="evidence" value="ECO:0007669"/>
    <property type="project" value="GOC"/>
</dbReference>
<dbReference type="GO" id="GO:0008915">
    <property type="term" value="F:lipid-A-disaccharide synthase activity"/>
    <property type="evidence" value="ECO:0007669"/>
    <property type="project" value="UniProtKB-UniRule"/>
</dbReference>
<dbReference type="GO" id="GO:0005543">
    <property type="term" value="F:phospholipid binding"/>
    <property type="evidence" value="ECO:0000318"/>
    <property type="project" value="GO_Central"/>
</dbReference>
<dbReference type="GO" id="GO:0009245">
    <property type="term" value="P:lipid A biosynthetic process"/>
    <property type="evidence" value="ECO:0000318"/>
    <property type="project" value="GO_Central"/>
</dbReference>
<dbReference type="FunFam" id="3.40.50.2000:FF:000245">
    <property type="entry name" value="Lipid-A-disaccharide synthase"/>
    <property type="match status" value="1"/>
</dbReference>
<dbReference type="Gene3D" id="3.40.50.2000">
    <property type="entry name" value="Glycogen Phosphorylase B"/>
    <property type="match status" value="1"/>
</dbReference>
<dbReference type="HAMAP" id="MF_00392">
    <property type="entry name" value="LpxB"/>
    <property type="match status" value="1"/>
</dbReference>
<dbReference type="InterPro" id="IPR003835">
    <property type="entry name" value="Glyco_trans_19"/>
</dbReference>
<dbReference type="NCBIfam" id="TIGR00215">
    <property type="entry name" value="lpxB"/>
    <property type="match status" value="1"/>
</dbReference>
<dbReference type="PANTHER" id="PTHR30372">
    <property type="entry name" value="LIPID-A-DISACCHARIDE SYNTHASE"/>
    <property type="match status" value="1"/>
</dbReference>
<dbReference type="PANTHER" id="PTHR30372:SF4">
    <property type="entry name" value="LIPID-A-DISACCHARIDE SYNTHASE, MITOCHONDRIAL-RELATED"/>
    <property type="match status" value="1"/>
</dbReference>
<dbReference type="Pfam" id="PF02684">
    <property type="entry name" value="LpxB"/>
    <property type="match status" value="1"/>
</dbReference>
<dbReference type="SUPFAM" id="SSF53756">
    <property type="entry name" value="UDP-Glycosyltransferase/glycogen phosphorylase"/>
    <property type="match status" value="1"/>
</dbReference>
<feature type="chain" id="PRO_0000190177" description="Lipid-A-disaccharide synthase">
    <location>
        <begin position="1"/>
        <end position="378"/>
    </location>
</feature>
<organism>
    <name type="scientific">Pseudomonas aeruginosa (strain ATCC 15692 / DSM 22644 / CIP 104116 / JCM 14847 / LMG 12228 / 1C / PRS 101 / PAO1)</name>
    <dbReference type="NCBI Taxonomy" id="208964"/>
    <lineage>
        <taxon>Bacteria</taxon>
        <taxon>Pseudomonadati</taxon>
        <taxon>Pseudomonadota</taxon>
        <taxon>Gammaproteobacteria</taxon>
        <taxon>Pseudomonadales</taxon>
        <taxon>Pseudomonadaceae</taxon>
        <taxon>Pseudomonas</taxon>
    </lineage>
</organism>
<reference key="1">
    <citation type="journal article" date="2000" name="Nature">
        <title>Complete genome sequence of Pseudomonas aeruginosa PAO1, an opportunistic pathogen.</title>
        <authorList>
            <person name="Stover C.K."/>
            <person name="Pham X.-Q.T."/>
            <person name="Erwin A.L."/>
            <person name="Mizoguchi S.D."/>
            <person name="Warrener P."/>
            <person name="Hickey M.J."/>
            <person name="Brinkman F.S.L."/>
            <person name="Hufnagle W.O."/>
            <person name="Kowalik D.J."/>
            <person name="Lagrou M."/>
            <person name="Garber R.L."/>
            <person name="Goltry L."/>
            <person name="Tolentino E."/>
            <person name="Westbrock-Wadman S."/>
            <person name="Yuan Y."/>
            <person name="Brody L.L."/>
            <person name="Coulter S.N."/>
            <person name="Folger K.R."/>
            <person name="Kas A."/>
            <person name="Larbig K."/>
            <person name="Lim R.M."/>
            <person name="Smith K.A."/>
            <person name="Spencer D.H."/>
            <person name="Wong G.K.-S."/>
            <person name="Wu Z."/>
            <person name="Paulsen I.T."/>
            <person name="Reizer J."/>
            <person name="Saier M.H. Jr."/>
            <person name="Hancock R.E.W."/>
            <person name="Lory S."/>
            <person name="Olson M.V."/>
        </authorList>
    </citation>
    <scope>NUCLEOTIDE SEQUENCE [LARGE SCALE GENOMIC DNA]</scope>
    <source>
        <strain>ATCC 15692 / DSM 22644 / CIP 104116 / JCM 14847 / LMG 12228 / 1C / PRS 101 / PAO1</strain>
    </source>
</reference>
<accession>Q9HXY8</accession>
<evidence type="ECO:0000250" key="1"/>
<evidence type="ECO:0000305" key="2"/>
<comment type="function">
    <text evidence="1">Condensation of UDP-2,3-diacylglucosamine and 2,3-diacylglucosamine-1-phosphate to form lipid A disaccharide, a precursor of lipid A, a phosphorylated glycolipid that anchors the lipopolysaccharide to the outer membrane of the cell.</text>
</comment>
<comment type="catalytic activity">
    <reaction>
        <text>a lipid X + a UDP-2-N,3-O-bis[(3R)-3-hydroxyacyl]-alpha-D-glucosamine = a lipid A disaccharide + UDP + H(+)</text>
        <dbReference type="Rhea" id="RHEA:67828"/>
        <dbReference type="ChEBI" id="CHEBI:15378"/>
        <dbReference type="ChEBI" id="CHEBI:58223"/>
        <dbReference type="ChEBI" id="CHEBI:137748"/>
        <dbReference type="ChEBI" id="CHEBI:176338"/>
        <dbReference type="ChEBI" id="CHEBI:176343"/>
        <dbReference type="EC" id="2.4.1.182"/>
    </reaction>
</comment>
<comment type="pathway">
    <text>Bacterial outer membrane biogenesis; LPS lipid A biosynthesis.</text>
</comment>
<comment type="similarity">
    <text evidence="2">Belongs to the LpxB family.</text>
</comment>
<protein>
    <recommendedName>
        <fullName>Lipid-A-disaccharide synthase</fullName>
        <ecNumber>2.4.1.182</ecNumber>
    </recommendedName>
</protein>
<proteinExistence type="inferred from homology"/>
<gene>
    <name type="primary">lpxB</name>
    <name type="ordered locus">PA3643</name>
</gene>
<sequence>MADGLRVALVAGEASGDILGSGLMQALRARHPDIEFIGVGGPRMEAEGLSSYFPMERLSVMGLVEVLGRLPELLRRRKRLIRTLIEARPDVMIGIDAPDFTLGVEHKLRQAGLRTVHYVSPSVWAWRQKRVLKIREACDLMLALFPFEARFYEEHGVPVRFVGHPLANTIPLQADRAAARARLGLPADGQVLALMPGSRGGEVGKLGALFLDTAQRLLVERPGLRFVLPCASAARREQIEQMLQGREPLPLTLLDGASHEALAACDAVLIASGTATLEALLYKRPMVVAYRVAGLTYRILKRLVKSPYISLPNLLAGRLLVPELIQDAATPQALAATLSPLLDDGSQQVEFFDAIHRALRQDASAQAAEAVLQLVERR</sequence>
<name>LPXB_PSEAE</name>
<keyword id="KW-0328">Glycosyltransferase</keyword>
<keyword id="KW-0441">Lipid A biosynthesis</keyword>
<keyword id="KW-0444">Lipid biosynthesis</keyword>
<keyword id="KW-0443">Lipid metabolism</keyword>
<keyword id="KW-1185">Reference proteome</keyword>
<keyword id="KW-0808">Transferase</keyword>